<accession>Q2L935</accession>
<proteinExistence type="inferred from homology"/>
<protein>
    <recommendedName>
        <fullName evidence="1">Protein PsbN</fullName>
    </recommendedName>
</protein>
<organism>
    <name type="scientific">Gossypium hirsutum</name>
    <name type="common">Upland cotton</name>
    <name type="synonym">Gossypium mexicanum</name>
    <dbReference type="NCBI Taxonomy" id="3635"/>
    <lineage>
        <taxon>Eukaryota</taxon>
        <taxon>Viridiplantae</taxon>
        <taxon>Streptophyta</taxon>
        <taxon>Embryophyta</taxon>
        <taxon>Tracheophyta</taxon>
        <taxon>Spermatophyta</taxon>
        <taxon>Magnoliopsida</taxon>
        <taxon>eudicotyledons</taxon>
        <taxon>Gunneridae</taxon>
        <taxon>Pentapetalae</taxon>
        <taxon>rosids</taxon>
        <taxon>malvids</taxon>
        <taxon>Malvales</taxon>
        <taxon>Malvaceae</taxon>
        <taxon>Malvoideae</taxon>
        <taxon>Gossypium</taxon>
    </lineage>
</organism>
<name>PSBN_GOSHI</name>
<reference key="1">
    <citation type="journal article" date="2006" name="BMC Genomics">
        <title>The complete chloroplast genome sequence of Gossypium hirsutum: organization and phylogenetic relationships to other angiosperms.</title>
        <authorList>
            <person name="Lee S.-B."/>
            <person name="Kaittanis C."/>
            <person name="Jansen R.K."/>
            <person name="Hostetler J.B."/>
            <person name="Tallon L.J."/>
            <person name="Town C.D."/>
            <person name="Daniell H."/>
        </authorList>
    </citation>
    <scope>NUCLEOTIDE SEQUENCE [LARGE SCALE GENOMIC DNA]</scope>
    <source>
        <strain>cv. Coker 310FR</strain>
    </source>
</reference>
<sequence length="43" mass="4662">METATLVAISISGLLVSFTGYALYTAFGQPSQQLRDPFEEHGD</sequence>
<keyword id="KW-0150">Chloroplast</keyword>
<keyword id="KW-0472">Membrane</keyword>
<keyword id="KW-0934">Plastid</keyword>
<keyword id="KW-1185">Reference proteome</keyword>
<keyword id="KW-0793">Thylakoid</keyword>
<keyword id="KW-0812">Transmembrane</keyword>
<keyword id="KW-1133">Transmembrane helix</keyword>
<evidence type="ECO:0000255" key="1">
    <source>
        <dbReference type="HAMAP-Rule" id="MF_00293"/>
    </source>
</evidence>
<comment type="function">
    <text evidence="1">May play a role in photosystem I and II biogenesis.</text>
</comment>
<comment type="subcellular location">
    <subcellularLocation>
        <location evidence="1">Plastid</location>
        <location evidence="1">Chloroplast thylakoid membrane</location>
        <topology evidence="1">Single-pass membrane protein</topology>
    </subcellularLocation>
</comment>
<comment type="similarity">
    <text evidence="1">Belongs to the PsbN family.</text>
</comment>
<comment type="caution">
    <text evidence="1">Originally thought to be a component of PSII; based on experiments in Synechocystis, N.tabacum and barley, and its absence from PSII in T.elongatus and T.vulcanus, this is probably not true.</text>
</comment>
<geneLocation type="chloroplast"/>
<gene>
    <name evidence="1" type="primary">psbN</name>
</gene>
<feature type="chain" id="PRO_0000232772" description="Protein PsbN">
    <location>
        <begin position="1"/>
        <end position="43"/>
    </location>
</feature>
<feature type="transmembrane region" description="Helical" evidence="1">
    <location>
        <begin position="5"/>
        <end position="27"/>
    </location>
</feature>
<dbReference type="EMBL" id="DQ345959">
    <property type="protein sequence ID" value="ABC73655.1"/>
    <property type="molecule type" value="Genomic_DNA"/>
</dbReference>
<dbReference type="RefSeq" id="YP_538964.1">
    <property type="nucleotide sequence ID" value="NC_007944.1"/>
</dbReference>
<dbReference type="SMR" id="Q2L935"/>
<dbReference type="GeneID" id="3989132"/>
<dbReference type="KEGG" id="ghi:3989132"/>
<dbReference type="OrthoDB" id="12543at41938"/>
<dbReference type="Proteomes" id="UP000189702">
    <property type="component" value="Chloroplast Pltd"/>
</dbReference>
<dbReference type="GO" id="GO:0009535">
    <property type="term" value="C:chloroplast thylakoid membrane"/>
    <property type="evidence" value="ECO:0007669"/>
    <property type="project" value="UniProtKB-SubCell"/>
</dbReference>
<dbReference type="GO" id="GO:0015979">
    <property type="term" value="P:photosynthesis"/>
    <property type="evidence" value="ECO:0007669"/>
    <property type="project" value="InterPro"/>
</dbReference>
<dbReference type="HAMAP" id="MF_00293">
    <property type="entry name" value="PSII_PsbN"/>
    <property type="match status" value="1"/>
</dbReference>
<dbReference type="InterPro" id="IPR003398">
    <property type="entry name" value="PSII_PsbN"/>
</dbReference>
<dbReference type="PANTHER" id="PTHR35326">
    <property type="entry name" value="PROTEIN PSBN"/>
    <property type="match status" value="1"/>
</dbReference>
<dbReference type="PANTHER" id="PTHR35326:SF3">
    <property type="entry name" value="PROTEIN PSBN"/>
    <property type="match status" value="1"/>
</dbReference>
<dbReference type="Pfam" id="PF02468">
    <property type="entry name" value="PsbN"/>
    <property type="match status" value="1"/>
</dbReference>